<keyword id="KW-0004">4Fe-4S</keyword>
<keyword id="KW-0997">Cell inner membrane</keyword>
<keyword id="KW-1003">Cell membrane</keyword>
<keyword id="KW-0408">Iron</keyword>
<keyword id="KW-0411">Iron-sulfur</keyword>
<keyword id="KW-0472">Membrane</keyword>
<keyword id="KW-0479">Metal-binding</keyword>
<keyword id="KW-0520">NAD</keyword>
<keyword id="KW-0874">Quinone</keyword>
<keyword id="KW-0677">Repeat</keyword>
<keyword id="KW-1278">Translocase</keyword>
<keyword id="KW-0830">Ubiquinone</keyword>
<comment type="function">
    <text evidence="1">NDH-1 shuttles electrons from NADH, via FMN and iron-sulfur (Fe-S) centers, to quinones in the respiratory chain. The immediate electron acceptor for the enzyme in this species is believed to be ubiquinone. Couples the redox reaction to proton translocation (for every two electrons transferred, four hydrogen ions are translocated across the cytoplasmic membrane), and thus conserves the redox energy in a proton gradient.</text>
</comment>
<comment type="catalytic activity">
    <reaction evidence="1">
        <text>a quinone + NADH + 5 H(+)(in) = a quinol + NAD(+) + 4 H(+)(out)</text>
        <dbReference type="Rhea" id="RHEA:57888"/>
        <dbReference type="ChEBI" id="CHEBI:15378"/>
        <dbReference type="ChEBI" id="CHEBI:24646"/>
        <dbReference type="ChEBI" id="CHEBI:57540"/>
        <dbReference type="ChEBI" id="CHEBI:57945"/>
        <dbReference type="ChEBI" id="CHEBI:132124"/>
    </reaction>
</comment>
<comment type="cofactor">
    <cofactor evidence="1">
        <name>[4Fe-4S] cluster</name>
        <dbReference type="ChEBI" id="CHEBI:49883"/>
    </cofactor>
    <text evidence="1">Binds 2 [4Fe-4S] clusters per subunit.</text>
</comment>
<comment type="subunit">
    <text evidence="1">NDH-1 is composed of 14 different subunits. Subunits NuoA, H, J, K, L, M, N constitute the membrane sector of the complex.</text>
</comment>
<comment type="subcellular location">
    <subcellularLocation>
        <location evidence="1">Cell inner membrane</location>
        <topology evidence="1">Peripheral membrane protein</topology>
    </subcellularLocation>
</comment>
<comment type="similarity">
    <text evidence="1">Belongs to the complex I 23 kDa subunit family.</text>
</comment>
<reference key="1">
    <citation type="journal article" date="2010" name="PLoS ONE">
        <title>The complete multipartite genome sequence of Cupriavidus necator JMP134, a versatile pollutant degrader.</title>
        <authorList>
            <person name="Lykidis A."/>
            <person name="Perez-Pantoja D."/>
            <person name="Ledger T."/>
            <person name="Mavromatis K."/>
            <person name="Anderson I.J."/>
            <person name="Ivanova N.N."/>
            <person name="Hooper S.D."/>
            <person name="Lapidus A."/>
            <person name="Lucas S."/>
            <person name="Gonzalez B."/>
            <person name="Kyrpides N.C."/>
        </authorList>
    </citation>
    <scope>NUCLEOTIDE SEQUENCE [LARGE SCALE GENOMIC DNA]</scope>
    <source>
        <strain>JMP134 / LMG 1197</strain>
    </source>
</reference>
<evidence type="ECO:0000255" key="1">
    <source>
        <dbReference type="HAMAP-Rule" id="MF_01351"/>
    </source>
</evidence>
<dbReference type="EC" id="7.1.1.-" evidence="1"/>
<dbReference type="EMBL" id="CP000090">
    <property type="protein sequence ID" value="AAZ60348.1"/>
    <property type="molecule type" value="Genomic_DNA"/>
</dbReference>
<dbReference type="SMR" id="Q473T5"/>
<dbReference type="STRING" id="264198.Reut_A0969"/>
<dbReference type="KEGG" id="reu:Reut_A0969"/>
<dbReference type="eggNOG" id="COG1143">
    <property type="taxonomic scope" value="Bacteria"/>
</dbReference>
<dbReference type="HOGENOM" id="CLU_067218_5_1_4"/>
<dbReference type="OrthoDB" id="9808559at2"/>
<dbReference type="GO" id="GO:0005886">
    <property type="term" value="C:plasma membrane"/>
    <property type="evidence" value="ECO:0007669"/>
    <property type="project" value="UniProtKB-SubCell"/>
</dbReference>
<dbReference type="GO" id="GO:0051539">
    <property type="term" value="F:4 iron, 4 sulfur cluster binding"/>
    <property type="evidence" value="ECO:0007669"/>
    <property type="project" value="UniProtKB-KW"/>
</dbReference>
<dbReference type="GO" id="GO:0005506">
    <property type="term" value="F:iron ion binding"/>
    <property type="evidence" value="ECO:0007669"/>
    <property type="project" value="UniProtKB-UniRule"/>
</dbReference>
<dbReference type="GO" id="GO:0050136">
    <property type="term" value="F:NADH:ubiquinone reductase (non-electrogenic) activity"/>
    <property type="evidence" value="ECO:0007669"/>
    <property type="project" value="UniProtKB-UniRule"/>
</dbReference>
<dbReference type="GO" id="GO:0048038">
    <property type="term" value="F:quinone binding"/>
    <property type="evidence" value="ECO:0007669"/>
    <property type="project" value="UniProtKB-KW"/>
</dbReference>
<dbReference type="GO" id="GO:0009060">
    <property type="term" value="P:aerobic respiration"/>
    <property type="evidence" value="ECO:0007669"/>
    <property type="project" value="TreeGrafter"/>
</dbReference>
<dbReference type="FunFam" id="3.30.70.3270:FF:000003">
    <property type="entry name" value="NADH-quinone oxidoreductase subunit I"/>
    <property type="match status" value="1"/>
</dbReference>
<dbReference type="Gene3D" id="3.30.70.3270">
    <property type="match status" value="1"/>
</dbReference>
<dbReference type="HAMAP" id="MF_01351">
    <property type="entry name" value="NDH1_NuoI"/>
    <property type="match status" value="1"/>
</dbReference>
<dbReference type="InterPro" id="IPR017896">
    <property type="entry name" value="4Fe4S_Fe-S-bd"/>
</dbReference>
<dbReference type="InterPro" id="IPR017900">
    <property type="entry name" value="4Fe4S_Fe_S_CS"/>
</dbReference>
<dbReference type="InterPro" id="IPR010226">
    <property type="entry name" value="NADH_quinone_OxRdtase_chainI"/>
</dbReference>
<dbReference type="NCBIfam" id="TIGR01971">
    <property type="entry name" value="NuoI"/>
    <property type="match status" value="1"/>
</dbReference>
<dbReference type="NCBIfam" id="NF004538">
    <property type="entry name" value="PRK05888.1-4"/>
    <property type="match status" value="1"/>
</dbReference>
<dbReference type="NCBIfam" id="NF004539">
    <property type="entry name" value="PRK05888.1-5"/>
    <property type="match status" value="1"/>
</dbReference>
<dbReference type="PANTHER" id="PTHR10849:SF20">
    <property type="entry name" value="NADH DEHYDROGENASE [UBIQUINONE] IRON-SULFUR PROTEIN 8, MITOCHONDRIAL"/>
    <property type="match status" value="1"/>
</dbReference>
<dbReference type="PANTHER" id="PTHR10849">
    <property type="entry name" value="NADH DEHYDROGENASE UBIQUINONE IRON-SULFUR PROTEIN 8, MITOCHONDRIAL"/>
    <property type="match status" value="1"/>
</dbReference>
<dbReference type="Pfam" id="PF12838">
    <property type="entry name" value="Fer4_7"/>
    <property type="match status" value="1"/>
</dbReference>
<dbReference type="SUPFAM" id="SSF54862">
    <property type="entry name" value="4Fe-4S ferredoxins"/>
    <property type="match status" value="1"/>
</dbReference>
<dbReference type="PROSITE" id="PS00198">
    <property type="entry name" value="4FE4S_FER_1"/>
    <property type="match status" value="2"/>
</dbReference>
<dbReference type="PROSITE" id="PS51379">
    <property type="entry name" value="4FE4S_FER_2"/>
    <property type="match status" value="2"/>
</dbReference>
<sequence>MLLAIKDFFNSLLLKELFKGMALTGRYLFARKVTVQFPEEKTPISPRFRGLHALRRYPNGEERCIACKLCEAVCPALAITIESDVRADGTRRTTRYDIDLTKCIFCGFCEEACPVDAVVETPILEYHGEKRGDLYFTKDMLLAVGDRYEPQIAAAKAADAKYR</sequence>
<accession>Q473T5</accession>
<proteinExistence type="inferred from homology"/>
<feature type="chain" id="PRO_0000250925" description="NADH-quinone oxidoreductase subunit I">
    <location>
        <begin position="1"/>
        <end position="163"/>
    </location>
</feature>
<feature type="domain" description="4Fe-4S ferredoxin-type 1" evidence="1">
    <location>
        <begin position="54"/>
        <end position="84"/>
    </location>
</feature>
<feature type="domain" description="4Fe-4S ferredoxin-type 2" evidence="1">
    <location>
        <begin position="94"/>
        <end position="123"/>
    </location>
</feature>
<feature type="binding site" evidence="1">
    <location>
        <position position="64"/>
    </location>
    <ligand>
        <name>[4Fe-4S] cluster</name>
        <dbReference type="ChEBI" id="CHEBI:49883"/>
        <label>1</label>
    </ligand>
</feature>
<feature type="binding site" evidence="1">
    <location>
        <position position="67"/>
    </location>
    <ligand>
        <name>[4Fe-4S] cluster</name>
        <dbReference type="ChEBI" id="CHEBI:49883"/>
        <label>1</label>
    </ligand>
</feature>
<feature type="binding site" evidence="1">
    <location>
        <position position="70"/>
    </location>
    <ligand>
        <name>[4Fe-4S] cluster</name>
        <dbReference type="ChEBI" id="CHEBI:49883"/>
        <label>1</label>
    </ligand>
</feature>
<feature type="binding site" evidence="1">
    <location>
        <position position="74"/>
    </location>
    <ligand>
        <name>[4Fe-4S] cluster</name>
        <dbReference type="ChEBI" id="CHEBI:49883"/>
        <label>2</label>
    </ligand>
</feature>
<feature type="binding site" evidence="1">
    <location>
        <position position="103"/>
    </location>
    <ligand>
        <name>[4Fe-4S] cluster</name>
        <dbReference type="ChEBI" id="CHEBI:49883"/>
        <label>2</label>
    </ligand>
</feature>
<feature type="binding site" evidence="1">
    <location>
        <position position="106"/>
    </location>
    <ligand>
        <name>[4Fe-4S] cluster</name>
        <dbReference type="ChEBI" id="CHEBI:49883"/>
        <label>2</label>
    </ligand>
</feature>
<feature type="binding site" evidence="1">
    <location>
        <position position="109"/>
    </location>
    <ligand>
        <name>[4Fe-4S] cluster</name>
        <dbReference type="ChEBI" id="CHEBI:49883"/>
        <label>2</label>
    </ligand>
</feature>
<feature type="binding site" evidence="1">
    <location>
        <position position="113"/>
    </location>
    <ligand>
        <name>[4Fe-4S] cluster</name>
        <dbReference type="ChEBI" id="CHEBI:49883"/>
        <label>1</label>
    </ligand>
</feature>
<name>NUOI_CUPPJ</name>
<gene>
    <name evidence="1" type="primary">nuoI</name>
    <name type="ordered locus">Reut_A0969</name>
</gene>
<organism>
    <name type="scientific">Cupriavidus pinatubonensis (strain JMP 134 / LMG 1197)</name>
    <name type="common">Cupriavidus necator (strain JMP 134)</name>
    <dbReference type="NCBI Taxonomy" id="264198"/>
    <lineage>
        <taxon>Bacteria</taxon>
        <taxon>Pseudomonadati</taxon>
        <taxon>Pseudomonadota</taxon>
        <taxon>Betaproteobacteria</taxon>
        <taxon>Burkholderiales</taxon>
        <taxon>Burkholderiaceae</taxon>
        <taxon>Cupriavidus</taxon>
    </lineage>
</organism>
<protein>
    <recommendedName>
        <fullName evidence="1">NADH-quinone oxidoreductase subunit I</fullName>
        <ecNumber evidence="1">7.1.1.-</ecNumber>
    </recommendedName>
    <alternativeName>
        <fullName evidence="1">NADH dehydrogenase I subunit I</fullName>
    </alternativeName>
    <alternativeName>
        <fullName evidence="1">NDH-1 subunit I</fullName>
    </alternativeName>
</protein>